<evidence type="ECO:0000255" key="1">
    <source>
        <dbReference type="HAMAP-Rule" id="MF_00373"/>
    </source>
</evidence>
<evidence type="ECO:0000256" key="2">
    <source>
        <dbReference type="SAM" id="MobiDB-lite"/>
    </source>
</evidence>
<evidence type="ECO:0000305" key="3"/>
<name>RL28_YERPB</name>
<gene>
    <name evidence="1" type="primary">rpmB</name>
    <name type="ordered locus">YPTS_0049</name>
</gene>
<comment type="similarity">
    <text evidence="1">Belongs to the bacterial ribosomal protein bL28 family.</text>
</comment>
<accession>B2JYN4</accession>
<sequence>MSRVCQVTGKRPMSGNNRSHAMNATKRRFLPNLHSHRFWVEGEKRFVTLRVSAKGMRVIDKKGIETVLAEIRARGEKY</sequence>
<proteinExistence type="inferred from homology"/>
<organism>
    <name type="scientific">Yersinia pseudotuberculosis serotype IB (strain PB1/+)</name>
    <dbReference type="NCBI Taxonomy" id="502801"/>
    <lineage>
        <taxon>Bacteria</taxon>
        <taxon>Pseudomonadati</taxon>
        <taxon>Pseudomonadota</taxon>
        <taxon>Gammaproteobacteria</taxon>
        <taxon>Enterobacterales</taxon>
        <taxon>Yersiniaceae</taxon>
        <taxon>Yersinia</taxon>
    </lineage>
</organism>
<keyword id="KW-0687">Ribonucleoprotein</keyword>
<keyword id="KW-0689">Ribosomal protein</keyword>
<dbReference type="EMBL" id="CP001048">
    <property type="protein sequence ID" value="ACC87048.1"/>
    <property type="molecule type" value="Genomic_DNA"/>
</dbReference>
<dbReference type="RefSeq" id="WP_002208991.1">
    <property type="nucleotide sequence ID" value="NZ_CP009780.1"/>
</dbReference>
<dbReference type="SMR" id="B2JYN4"/>
<dbReference type="GeneID" id="96663531"/>
<dbReference type="KEGG" id="ypb:YPTS_0049"/>
<dbReference type="PATRIC" id="fig|502801.10.peg.3725"/>
<dbReference type="GO" id="GO:1990904">
    <property type="term" value="C:ribonucleoprotein complex"/>
    <property type="evidence" value="ECO:0007669"/>
    <property type="project" value="UniProtKB-KW"/>
</dbReference>
<dbReference type="GO" id="GO:0005840">
    <property type="term" value="C:ribosome"/>
    <property type="evidence" value="ECO:0007669"/>
    <property type="project" value="UniProtKB-KW"/>
</dbReference>
<dbReference type="GO" id="GO:0003735">
    <property type="term" value="F:structural constituent of ribosome"/>
    <property type="evidence" value="ECO:0007669"/>
    <property type="project" value="InterPro"/>
</dbReference>
<dbReference type="GO" id="GO:0006412">
    <property type="term" value="P:translation"/>
    <property type="evidence" value="ECO:0007669"/>
    <property type="project" value="UniProtKB-UniRule"/>
</dbReference>
<dbReference type="FunFam" id="2.30.170.40:FF:000001">
    <property type="entry name" value="50S ribosomal protein L28"/>
    <property type="match status" value="1"/>
</dbReference>
<dbReference type="Gene3D" id="2.30.170.40">
    <property type="entry name" value="Ribosomal protein L28/L24"/>
    <property type="match status" value="1"/>
</dbReference>
<dbReference type="HAMAP" id="MF_00373">
    <property type="entry name" value="Ribosomal_bL28"/>
    <property type="match status" value="1"/>
</dbReference>
<dbReference type="InterPro" id="IPR050096">
    <property type="entry name" value="Bacterial_rp_bL28"/>
</dbReference>
<dbReference type="InterPro" id="IPR026569">
    <property type="entry name" value="Ribosomal_bL28"/>
</dbReference>
<dbReference type="InterPro" id="IPR034704">
    <property type="entry name" value="Ribosomal_bL28/bL31-like_sf"/>
</dbReference>
<dbReference type="InterPro" id="IPR001383">
    <property type="entry name" value="Ribosomal_bL28_bact-type"/>
</dbReference>
<dbReference type="InterPro" id="IPR037147">
    <property type="entry name" value="Ribosomal_bL28_sf"/>
</dbReference>
<dbReference type="NCBIfam" id="TIGR00009">
    <property type="entry name" value="L28"/>
    <property type="match status" value="1"/>
</dbReference>
<dbReference type="PANTHER" id="PTHR39080">
    <property type="entry name" value="50S RIBOSOMAL PROTEIN L28"/>
    <property type="match status" value="1"/>
</dbReference>
<dbReference type="PANTHER" id="PTHR39080:SF1">
    <property type="entry name" value="LARGE RIBOSOMAL SUBUNIT PROTEIN BL28A"/>
    <property type="match status" value="1"/>
</dbReference>
<dbReference type="Pfam" id="PF00830">
    <property type="entry name" value="Ribosomal_L28"/>
    <property type="match status" value="1"/>
</dbReference>
<dbReference type="SUPFAM" id="SSF143800">
    <property type="entry name" value="L28p-like"/>
    <property type="match status" value="1"/>
</dbReference>
<reference key="1">
    <citation type="submission" date="2008-04" db="EMBL/GenBank/DDBJ databases">
        <title>Complete sequence of Yersinia pseudotuberculosis PB1/+.</title>
        <authorList>
            <person name="Copeland A."/>
            <person name="Lucas S."/>
            <person name="Lapidus A."/>
            <person name="Glavina del Rio T."/>
            <person name="Dalin E."/>
            <person name="Tice H."/>
            <person name="Bruce D."/>
            <person name="Goodwin L."/>
            <person name="Pitluck S."/>
            <person name="Munk A.C."/>
            <person name="Brettin T."/>
            <person name="Detter J.C."/>
            <person name="Han C."/>
            <person name="Tapia R."/>
            <person name="Schmutz J."/>
            <person name="Larimer F."/>
            <person name="Land M."/>
            <person name="Hauser L."/>
            <person name="Challacombe J.F."/>
            <person name="Green L."/>
            <person name="Lindler L.E."/>
            <person name="Nikolich M.P."/>
            <person name="Richardson P."/>
        </authorList>
    </citation>
    <scope>NUCLEOTIDE SEQUENCE [LARGE SCALE GENOMIC DNA]</scope>
    <source>
        <strain>PB1/+</strain>
    </source>
</reference>
<feature type="chain" id="PRO_1000121713" description="Large ribosomal subunit protein bL28">
    <location>
        <begin position="1"/>
        <end position="78"/>
    </location>
</feature>
<feature type="region of interest" description="Disordered" evidence="2">
    <location>
        <begin position="1"/>
        <end position="22"/>
    </location>
</feature>
<protein>
    <recommendedName>
        <fullName evidence="1">Large ribosomal subunit protein bL28</fullName>
    </recommendedName>
    <alternativeName>
        <fullName evidence="3">50S ribosomal protein L28</fullName>
    </alternativeName>
</protein>